<accession>Q57PU2</accession>
<name>YDIV_SALCH</name>
<protein>
    <recommendedName>
        <fullName>Anti-FlhC(2)FlhD(4) factor YdiV</fullName>
    </recommendedName>
</protein>
<reference key="1">
    <citation type="journal article" date="2005" name="Nucleic Acids Res.">
        <title>The genome sequence of Salmonella enterica serovar Choleraesuis, a highly invasive and resistant zoonotic pathogen.</title>
        <authorList>
            <person name="Chiu C.-H."/>
            <person name="Tang P."/>
            <person name="Chu C."/>
            <person name="Hu S."/>
            <person name="Bao Q."/>
            <person name="Yu J."/>
            <person name="Chou Y.-Y."/>
            <person name="Wang H.-S."/>
            <person name="Lee Y.-S."/>
        </authorList>
    </citation>
    <scope>NUCLEOTIDE SEQUENCE [LARGE SCALE GENOMIC DNA]</scope>
    <source>
        <strain>SC-B67</strain>
    </source>
</reference>
<proteinExistence type="inferred from homology"/>
<dbReference type="EMBL" id="AE017220">
    <property type="protein sequence ID" value="AAX65269.1"/>
    <property type="molecule type" value="Genomic_DNA"/>
</dbReference>
<dbReference type="RefSeq" id="WP_001539882.1">
    <property type="nucleotide sequence ID" value="NC_006905.1"/>
</dbReference>
<dbReference type="SMR" id="Q57PU2"/>
<dbReference type="KEGG" id="sec:SCH_1363"/>
<dbReference type="HOGENOM" id="CLU_089254_1_1_6"/>
<dbReference type="Proteomes" id="UP000000538">
    <property type="component" value="Chromosome"/>
</dbReference>
<dbReference type="Gene3D" id="3.20.20.450">
    <property type="entry name" value="EAL domain"/>
    <property type="match status" value="1"/>
</dbReference>
<dbReference type="InterPro" id="IPR001633">
    <property type="entry name" value="EAL_dom"/>
</dbReference>
<dbReference type="InterPro" id="IPR035919">
    <property type="entry name" value="EAL_sf"/>
</dbReference>
<dbReference type="Pfam" id="PF00563">
    <property type="entry name" value="EAL"/>
    <property type="match status" value="1"/>
</dbReference>
<dbReference type="SUPFAM" id="SSF141868">
    <property type="entry name" value="EAL domain-like"/>
    <property type="match status" value="1"/>
</dbReference>
<evidence type="ECO:0000250" key="1"/>
<evidence type="ECO:0000305" key="2"/>
<gene>
    <name type="primary">ydiV</name>
    <name type="ordered locus">SCH_1363</name>
</gene>
<organism>
    <name type="scientific">Salmonella choleraesuis (strain SC-B67)</name>
    <dbReference type="NCBI Taxonomy" id="321314"/>
    <lineage>
        <taxon>Bacteria</taxon>
        <taxon>Pseudomonadati</taxon>
        <taxon>Pseudomonadota</taxon>
        <taxon>Gammaproteobacteria</taxon>
        <taxon>Enterobacterales</taxon>
        <taxon>Enterobacteriaceae</taxon>
        <taxon>Salmonella</taxon>
    </lineage>
</organism>
<sequence length="237" mass="26412">MIASLDELYHSELFFLPVMDENAWLVGLAIIATFAAEDGAVRMPTELVAPRLSVEEQYCLFVEKLALLETCQHFFIQHKLIAWLNLPPAISDLLLLDSELFSRAARFPFLELAINENYPGLNQGKNNETLANLAMHFPLMLANFGSGEASTKAIFDGLFKRVMLDKNFIQQRAEMISFEPFMHAIVAQISSSCESLMIAGIDTEAMFARAAPLGFSAFQGGLWPPVPVSQLIKLVQR</sequence>
<feature type="chain" id="PRO_0000346866" description="Anti-FlhC(2)FlhD(4) factor YdiV">
    <location>
        <begin position="1"/>
        <end position="237"/>
    </location>
</feature>
<feature type="domain" description="EAL">
    <location>
        <begin position="1"/>
        <end position="237"/>
    </location>
</feature>
<keyword id="KW-0678">Repressor</keyword>
<keyword id="KW-0804">Transcription</keyword>
<keyword id="KW-0805">Transcription regulation</keyword>
<keyword id="KW-0843">Virulence</keyword>
<comment type="function">
    <text evidence="1">Acts as an anti-FlhC(2)FlhD(4) factor by binding to FlhD, decreasing its ability to bind DNA, and thus negatively regulates expression of flagellar class II operons, decreasing motility in nutrient-poor medium. Required for resistance to host phagocyte oxidase (By similarity).</text>
</comment>
<comment type="subunit">
    <text evidence="1">Interacts with FlhD in the FlhC(2)FlhD(4) heterohexamer, inhibiting its ability to activate transcription.</text>
</comment>
<comment type="similarity">
    <text evidence="2">Belongs to the YdiV family.</text>
</comment>